<organism>
    <name type="scientific">Mus musculus</name>
    <name type="common">Mouse</name>
    <dbReference type="NCBI Taxonomy" id="10090"/>
    <lineage>
        <taxon>Eukaryota</taxon>
        <taxon>Metazoa</taxon>
        <taxon>Chordata</taxon>
        <taxon>Craniata</taxon>
        <taxon>Vertebrata</taxon>
        <taxon>Euteleostomi</taxon>
        <taxon>Mammalia</taxon>
        <taxon>Eutheria</taxon>
        <taxon>Euarchontoglires</taxon>
        <taxon>Glires</taxon>
        <taxon>Rodentia</taxon>
        <taxon>Myomorpha</taxon>
        <taxon>Muroidea</taxon>
        <taxon>Muridae</taxon>
        <taxon>Murinae</taxon>
        <taxon>Mus</taxon>
        <taxon>Mus</taxon>
    </lineage>
</organism>
<reference key="1">
    <citation type="journal article" date="1998" name="J. Biol. Chem.">
        <title>A homologue of Saccharomyces cerevisiae Dpm1p is not sufficient for synthesis of dolichol-phosphate-mannose in mammalian cells.</title>
        <authorList>
            <person name="Tomita S."/>
            <person name="Inoue N."/>
            <person name="Maeda Y."/>
            <person name="Ohishi K."/>
            <person name="Takeda J."/>
            <person name="Kinoshita T."/>
        </authorList>
    </citation>
    <scope>NUCLEOTIDE SEQUENCE [MRNA]</scope>
    <scope>FUNCTION</scope>
    <scope>CATALYTIC ACTIVITY</scope>
    <scope>PATHWAY</scope>
</reference>
<reference key="2">
    <citation type="journal article" date="2005" name="Science">
        <title>The transcriptional landscape of the mammalian genome.</title>
        <authorList>
            <person name="Carninci P."/>
            <person name="Kasukawa T."/>
            <person name="Katayama S."/>
            <person name="Gough J."/>
            <person name="Frith M.C."/>
            <person name="Maeda N."/>
            <person name="Oyama R."/>
            <person name="Ravasi T."/>
            <person name="Lenhard B."/>
            <person name="Wells C."/>
            <person name="Kodzius R."/>
            <person name="Shimokawa K."/>
            <person name="Bajic V.B."/>
            <person name="Brenner S.E."/>
            <person name="Batalov S."/>
            <person name="Forrest A.R."/>
            <person name="Zavolan M."/>
            <person name="Davis M.J."/>
            <person name="Wilming L.G."/>
            <person name="Aidinis V."/>
            <person name="Allen J.E."/>
            <person name="Ambesi-Impiombato A."/>
            <person name="Apweiler R."/>
            <person name="Aturaliya R.N."/>
            <person name="Bailey T.L."/>
            <person name="Bansal M."/>
            <person name="Baxter L."/>
            <person name="Beisel K.W."/>
            <person name="Bersano T."/>
            <person name="Bono H."/>
            <person name="Chalk A.M."/>
            <person name="Chiu K.P."/>
            <person name="Choudhary V."/>
            <person name="Christoffels A."/>
            <person name="Clutterbuck D.R."/>
            <person name="Crowe M.L."/>
            <person name="Dalla E."/>
            <person name="Dalrymple B.P."/>
            <person name="de Bono B."/>
            <person name="Della Gatta G."/>
            <person name="di Bernardo D."/>
            <person name="Down T."/>
            <person name="Engstrom P."/>
            <person name="Fagiolini M."/>
            <person name="Faulkner G."/>
            <person name="Fletcher C.F."/>
            <person name="Fukushima T."/>
            <person name="Furuno M."/>
            <person name="Futaki S."/>
            <person name="Gariboldi M."/>
            <person name="Georgii-Hemming P."/>
            <person name="Gingeras T.R."/>
            <person name="Gojobori T."/>
            <person name="Green R.E."/>
            <person name="Gustincich S."/>
            <person name="Harbers M."/>
            <person name="Hayashi Y."/>
            <person name="Hensch T.K."/>
            <person name="Hirokawa N."/>
            <person name="Hill D."/>
            <person name="Huminiecki L."/>
            <person name="Iacono M."/>
            <person name="Ikeo K."/>
            <person name="Iwama A."/>
            <person name="Ishikawa T."/>
            <person name="Jakt M."/>
            <person name="Kanapin A."/>
            <person name="Katoh M."/>
            <person name="Kawasawa Y."/>
            <person name="Kelso J."/>
            <person name="Kitamura H."/>
            <person name="Kitano H."/>
            <person name="Kollias G."/>
            <person name="Krishnan S.P."/>
            <person name="Kruger A."/>
            <person name="Kummerfeld S.K."/>
            <person name="Kurochkin I.V."/>
            <person name="Lareau L.F."/>
            <person name="Lazarevic D."/>
            <person name="Lipovich L."/>
            <person name="Liu J."/>
            <person name="Liuni S."/>
            <person name="McWilliam S."/>
            <person name="Madan Babu M."/>
            <person name="Madera M."/>
            <person name="Marchionni L."/>
            <person name="Matsuda H."/>
            <person name="Matsuzawa S."/>
            <person name="Miki H."/>
            <person name="Mignone F."/>
            <person name="Miyake S."/>
            <person name="Morris K."/>
            <person name="Mottagui-Tabar S."/>
            <person name="Mulder N."/>
            <person name="Nakano N."/>
            <person name="Nakauchi H."/>
            <person name="Ng P."/>
            <person name="Nilsson R."/>
            <person name="Nishiguchi S."/>
            <person name="Nishikawa S."/>
            <person name="Nori F."/>
            <person name="Ohara O."/>
            <person name="Okazaki Y."/>
            <person name="Orlando V."/>
            <person name="Pang K.C."/>
            <person name="Pavan W.J."/>
            <person name="Pavesi G."/>
            <person name="Pesole G."/>
            <person name="Petrovsky N."/>
            <person name="Piazza S."/>
            <person name="Reed J."/>
            <person name="Reid J.F."/>
            <person name="Ring B.Z."/>
            <person name="Ringwald M."/>
            <person name="Rost B."/>
            <person name="Ruan Y."/>
            <person name="Salzberg S.L."/>
            <person name="Sandelin A."/>
            <person name="Schneider C."/>
            <person name="Schoenbach C."/>
            <person name="Sekiguchi K."/>
            <person name="Semple C.A."/>
            <person name="Seno S."/>
            <person name="Sessa L."/>
            <person name="Sheng Y."/>
            <person name="Shibata Y."/>
            <person name="Shimada H."/>
            <person name="Shimada K."/>
            <person name="Silva D."/>
            <person name="Sinclair B."/>
            <person name="Sperling S."/>
            <person name="Stupka E."/>
            <person name="Sugiura K."/>
            <person name="Sultana R."/>
            <person name="Takenaka Y."/>
            <person name="Taki K."/>
            <person name="Tammoja K."/>
            <person name="Tan S.L."/>
            <person name="Tang S."/>
            <person name="Taylor M.S."/>
            <person name="Tegner J."/>
            <person name="Teichmann S.A."/>
            <person name="Ueda H.R."/>
            <person name="van Nimwegen E."/>
            <person name="Verardo R."/>
            <person name="Wei C.L."/>
            <person name="Yagi K."/>
            <person name="Yamanishi H."/>
            <person name="Zabarovsky E."/>
            <person name="Zhu S."/>
            <person name="Zimmer A."/>
            <person name="Hide W."/>
            <person name="Bult C."/>
            <person name="Grimmond S.M."/>
            <person name="Teasdale R.D."/>
            <person name="Liu E.T."/>
            <person name="Brusic V."/>
            <person name="Quackenbush J."/>
            <person name="Wahlestedt C."/>
            <person name="Mattick J.S."/>
            <person name="Hume D.A."/>
            <person name="Kai C."/>
            <person name="Sasaki D."/>
            <person name="Tomaru Y."/>
            <person name="Fukuda S."/>
            <person name="Kanamori-Katayama M."/>
            <person name="Suzuki M."/>
            <person name="Aoki J."/>
            <person name="Arakawa T."/>
            <person name="Iida J."/>
            <person name="Imamura K."/>
            <person name="Itoh M."/>
            <person name="Kato T."/>
            <person name="Kawaji H."/>
            <person name="Kawagashira N."/>
            <person name="Kawashima T."/>
            <person name="Kojima M."/>
            <person name="Kondo S."/>
            <person name="Konno H."/>
            <person name="Nakano K."/>
            <person name="Ninomiya N."/>
            <person name="Nishio T."/>
            <person name="Okada M."/>
            <person name="Plessy C."/>
            <person name="Shibata K."/>
            <person name="Shiraki T."/>
            <person name="Suzuki S."/>
            <person name="Tagami M."/>
            <person name="Waki K."/>
            <person name="Watahiki A."/>
            <person name="Okamura-Oho Y."/>
            <person name="Suzuki H."/>
            <person name="Kawai J."/>
            <person name="Hayashizaki Y."/>
        </authorList>
    </citation>
    <scope>NUCLEOTIDE SEQUENCE [LARGE SCALE MRNA]</scope>
    <source>
        <strain>C57BL/6J</strain>
        <tissue>Cerebellum</tissue>
        <tissue>Lung</tissue>
        <tissue>Small intestine</tissue>
    </source>
</reference>
<reference key="3">
    <citation type="journal article" date="2004" name="Genome Res.">
        <title>The status, quality, and expansion of the NIH full-length cDNA project: the Mammalian Gene Collection (MGC).</title>
        <authorList>
            <consortium name="The MGC Project Team"/>
        </authorList>
    </citation>
    <scope>NUCLEOTIDE SEQUENCE [LARGE SCALE MRNA]</scope>
    <source>
        <tissue>Liver</tissue>
    </source>
</reference>
<reference key="4">
    <citation type="journal article" date="2010" name="Cell">
        <title>A tissue-specific atlas of mouse protein phosphorylation and expression.</title>
        <authorList>
            <person name="Huttlin E.L."/>
            <person name="Jedrychowski M.P."/>
            <person name="Elias J.E."/>
            <person name="Goswami T."/>
            <person name="Rad R."/>
            <person name="Beausoleil S.A."/>
            <person name="Villen J."/>
            <person name="Haas W."/>
            <person name="Sowa M.E."/>
            <person name="Gygi S.P."/>
        </authorList>
    </citation>
    <scope>IDENTIFICATION BY MASS SPECTROMETRY [LARGE SCALE ANALYSIS]</scope>
    <source>
        <tissue>Brain</tissue>
        <tissue>Heart</tissue>
        <tissue>Kidney</tissue>
        <tissue>Liver</tissue>
        <tissue>Lung</tissue>
        <tissue>Pancreas</tissue>
        <tissue>Spleen</tissue>
        <tissue>Testis</tissue>
    </source>
</reference>
<feature type="initiator methionine" description="Removed" evidence="1">
    <location>
        <position position="1"/>
    </location>
</feature>
<feature type="chain" id="PRO_0000059171" description="Dolichol-phosphate mannosyltransferase subunit 1">
    <location>
        <begin position="2"/>
        <end position="260"/>
    </location>
</feature>
<feature type="region of interest" description="Disordered" evidence="3">
    <location>
        <begin position="1"/>
        <end position="25"/>
    </location>
</feature>
<feature type="binding site" evidence="2">
    <location>
        <position position="32"/>
    </location>
    <ligand>
        <name>GDP-alpha-D-mannose</name>
        <dbReference type="ChEBI" id="CHEBI:57527"/>
    </ligand>
</feature>
<feature type="binding site" evidence="2">
    <location>
        <position position="34"/>
    </location>
    <ligand>
        <name>GDP-alpha-D-mannose</name>
        <dbReference type="ChEBI" id="CHEBI:57527"/>
    </ligand>
</feature>
<feature type="binding site" evidence="2">
    <location>
        <position position="36"/>
    </location>
    <ligand>
        <name>GDP-alpha-D-mannose</name>
        <dbReference type="ChEBI" id="CHEBI:57527"/>
    </ligand>
</feature>
<feature type="binding site" evidence="2">
    <location>
        <position position="63"/>
    </location>
    <ligand>
        <name>GDP-alpha-D-mannose</name>
        <dbReference type="ChEBI" id="CHEBI:57527"/>
    </ligand>
</feature>
<feature type="binding site" evidence="2">
    <location>
        <position position="65"/>
    </location>
    <ligand>
        <name>GDP-alpha-D-mannose</name>
        <dbReference type="ChEBI" id="CHEBI:57527"/>
    </ligand>
</feature>
<feature type="binding site" evidence="2">
    <location>
        <position position="118"/>
    </location>
    <ligand>
        <name>GDP-alpha-D-mannose</name>
        <dbReference type="ChEBI" id="CHEBI:57527"/>
    </ligand>
</feature>
<feature type="binding site" evidence="2">
    <location>
        <position position="119"/>
    </location>
    <ligand>
        <name>GDP-alpha-D-mannose</name>
        <dbReference type="ChEBI" id="CHEBI:57527"/>
    </ligand>
</feature>
<feature type="binding site" evidence="2">
    <location>
        <position position="120"/>
    </location>
    <ligand>
        <name>GDP-alpha-D-mannose</name>
        <dbReference type="ChEBI" id="CHEBI:57527"/>
    </ligand>
</feature>
<feature type="binding site" evidence="2">
    <location>
        <position position="120"/>
    </location>
    <ligand>
        <name>Mg(2+)</name>
        <dbReference type="ChEBI" id="CHEBI:18420"/>
    </ligand>
</feature>
<feature type="binding site" evidence="2">
    <location>
        <position position="120"/>
    </location>
    <ligand>
        <name>Mn(2+)</name>
        <dbReference type="ChEBI" id="CHEBI:29035"/>
    </ligand>
</feature>
<feature type="binding site" evidence="2">
    <location>
        <position position="147"/>
    </location>
    <ligand>
        <name>GDP-alpha-D-mannose</name>
        <dbReference type="ChEBI" id="CHEBI:57527"/>
    </ligand>
</feature>
<feature type="binding site" evidence="2">
    <location>
        <position position="234"/>
    </location>
    <ligand>
        <name>GDP-alpha-D-mannose</name>
        <dbReference type="ChEBI" id="CHEBI:57527"/>
    </ligand>
</feature>
<feature type="binding site" evidence="2">
    <location>
        <position position="240"/>
    </location>
    <ligand>
        <name>GDP-alpha-D-mannose</name>
        <dbReference type="ChEBI" id="CHEBI:57527"/>
    </ligand>
</feature>
<feature type="modified residue" description="N-acetylalanine" evidence="1">
    <location>
        <position position="2"/>
    </location>
</feature>
<feature type="modified residue" description="Phosphoserine" evidence="1">
    <location>
        <position position="3"/>
    </location>
</feature>
<feature type="modified residue" description="Phosphoserine" evidence="1">
    <location>
        <position position="9"/>
    </location>
</feature>
<feature type="sequence conflict" description="In Ref. 2; BAB25735." evidence="5" ref="2">
    <original>E</original>
    <variation>G</variation>
    <location>
        <position position="76"/>
    </location>
</feature>
<feature type="sequence conflict" description="In Ref. 2; BAB25735." evidence="5" ref="2">
    <original>S</original>
    <variation>Y</variation>
    <location>
        <position position="122"/>
    </location>
</feature>
<name>DPM1_MOUSE</name>
<accession>O70152</accession>
<accession>Q9D829</accession>
<gene>
    <name type="primary">Dpm1</name>
</gene>
<sequence length="260" mass="29175">MASTGASRSLAASPRPPQGRSSRQDKYSVLLPTYNERENLPLIVWLLVKSFSESAINYEIIIIDDGSPDGTREVAEQLAEIYGPDRILLRPREKKLGLGTAYIHGIKHATGNYVIIMDADLSHHPKFIPEFIRKQKEGNFDIVSGTRYKGNGGVYGWDLKRKIISRGANFITQILLRPGASDLTGSFRLYRKEVLQKLIEKCVSKGYVFQMEMIVRARQMNYTIGEVPISFVDRVYGESKLGGNEIVSFLKGLLTLFATT</sequence>
<proteinExistence type="evidence at protein level"/>
<protein>
    <recommendedName>
        <fullName>Dolichol-phosphate mannosyltransferase subunit 1</fullName>
        <ecNumber evidence="6">2.4.1.83</ecNumber>
    </recommendedName>
    <alternativeName>
        <fullName>Dolichol-phosphate mannose synthase subunit 1</fullName>
        <shortName>DPM synthase subunit 1</shortName>
    </alternativeName>
    <alternativeName>
        <fullName>Dolichyl-phosphate beta-D-mannosyltransferase subunit 1</fullName>
    </alternativeName>
    <alternativeName>
        <fullName>Mannose-P-dolichol synthase subunit 1</fullName>
        <shortName>MPD synthase</shortName>
    </alternativeName>
</protein>
<dbReference type="EC" id="2.4.1.83" evidence="6"/>
<dbReference type="EMBL" id="AB004789">
    <property type="protein sequence ID" value="BAA25759.1"/>
    <property type="molecule type" value="mRNA"/>
</dbReference>
<dbReference type="EMBL" id="AK005268">
    <property type="protein sequence ID" value="BAB23920.1"/>
    <property type="molecule type" value="mRNA"/>
</dbReference>
<dbReference type="EMBL" id="AK004834">
    <property type="protein sequence ID" value="BAB23602.1"/>
    <property type="molecule type" value="mRNA"/>
</dbReference>
<dbReference type="EMBL" id="AK008548">
    <property type="protein sequence ID" value="BAB25735.1"/>
    <property type="molecule type" value="mRNA"/>
</dbReference>
<dbReference type="EMBL" id="BC061151">
    <property type="protein sequence ID" value="AAH61151.1"/>
    <property type="molecule type" value="mRNA"/>
</dbReference>
<dbReference type="CCDS" id="CCDS17109.1"/>
<dbReference type="RefSeq" id="NP_001297013.1">
    <property type="nucleotide sequence ID" value="NM_001310084.1"/>
</dbReference>
<dbReference type="RefSeq" id="NP_034202.1">
    <property type="nucleotide sequence ID" value="NM_010072.4"/>
</dbReference>
<dbReference type="SMR" id="O70152"/>
<dbReference type="BioGRID" id="199298">
    <property type="interactions" value="12"/>
</dbReference>
<dbReference type="FunCoup" id="O70152">
    <property type="interactions" value="3107"/>
</dbReference>
<dbReference type="IntAct" id="O70152">
    <property type="interactions" value="1"/>
</dbReference>
<dbReference type="MINT" id="O70152"/>
<dbReference type="STRING" id="10090.ENSMUSP00000118776"/>
<dbReference type="CAZy" id="GT2">
    <property type="family name" value="Glycosyltransferase Family 2"/>
</dbReference>
<dbReference type="GlyGen" id="O70152">
    <property type="glycosylation" value="1 site, 1 O-linked glycan (1 site)"/>
</dbReference>
<dbReference type="iPTMnet" id="O70152"/>
<dbReference type="PhosphoSitePlus" id="O70152"/>
<dbReference type="SwissPalm" id="O70152"/>
<dbReference type="jPOST" id="O70152"/>
<dbReference type="PaxDb" id="10090-ENSMUSP00000118776"/>
<dbReference type="PeptideAtlas" id="O70152"/>
<dbReference type="ProteomicsDB" id="279477"/>
<dbReference type="Pumba" id="O70152"/>
<dbReference type="DNASU" id="13480"/>
<dbReference type="Ensembl" id="ENSMUST00000138667.2">
    <property type="protein sequence ID" value="ENSMUSP00000139070.2"/>
    <property type="gene ID" value="ENSMUSG00000093752.2"/>
</dbReference>
<dbReference type="Ensembl" id="ENSMUST00000154111.8">
    <property type="protein sequence ID" value="ENSMUSP00000118776.2"/>
    <property type="gene ID" value="ENSMUSG00000078919.11"/>
</dbReference>
<dbReference type="GeneID" id="13480"/>
<dbReference type="KEGG" id="mmu:13480"/>
<dbReference type="UCSC" id="uc008oas.1">
    <property type="organism name" value="mouse"/>
</dbReference>
<dbReference type="AGR" id="MGI:1330239"/>
<dbReference type="CTD" id="8813"/>
<dbReference type="MGI" id="MGI:1330239">
    <property type="gene designation" value="Dpm1"/>
</dbReference>
<dbReference type="VEuPathDB" id="HostDB:ENSMUSG00000078919"/>
<dbReference type="VEuPathDB" id="HostDB:ENSMUSG00000093752"/>
<dbReference type="eggNOG" id="KOG2978">
    <property type="taxonomic scope" value="Eukaryota"/>
</dbReference>
<dbReference type="GeneTree" id="ENSGT00940000153481"/>
<dbReference type="HOGENOM" id="CLU_033536_13_3_1"/>
<dbReference type="InParanoid" id="O70152"/>
<dbReference type="OMA" id="KCFRREV"/>
<dbReference type="OrthoDB" id="2603at2759"/>
<dbReference type="PhylomeDB" id="O70152"/>
<dbReference type="TreeFam" id="TF105617"/>
<dbReference type="Reactome" id="R-MMU-162699">
    <property type="pathway name" value="Synthesis of dolichyl-phosphate mannose"/>
</dbReference>
<dbReference type="UniPathway" id="UPA00378"/>
<dbReference type="BioGRID-ORCS" id="13480">
    <property type="hits" value="10 hits in 81 CRISPR screens"/>
</dbReference>
<dbReference type="PRO" id="PR:O70152"/>
<dbReference type="Proteomes" id="UP000000589">
    <property type="component" value="Chromosome 2"/>
</dbReference>
<dbReference type="RNAct" id="O70152">
    <property type="molecule type" value="protein"/>
</dbReference>
<dbReference type="Bgee" id="ENSMUSG00000078919">
    <property type="expression patterns" value="Expressed in spermatocyte and 191 other cell types or tissues"/>
</dbReference>
<dbReference type="ExpressionAtlas" id="O70152">
    <property type="expression patterns" value="baseline and differential"/>
</dbReference>
<dbReference type="GO" id="GO:0033185">
    <property type="term" value="C:dolichol-phosphate-mannose synthase complex"/>
    <property type="evidence" value="ECO:0000266"/>
    <property type="project" value="MGI"/>
</dbReference>
<dbReference type="GO" id="GO:0005783">
    <property type="term" value="C:endoplasmic reticulum"/>
    <property type="evidence" value="ECO:0000266"/>
    <property type="project" value="MGI"/>
</dbReference>
<dbReference type="GO" id="GO:0005789">
    <property type="term" value="C:endoplasmic reticulum membrane"/>
    <property type="evidence" value="ECO:0000250"/>
    <property type="project" value="HGNC-UCL"/>
</dbReference>
<dbReference type="GO" id="GO:0016020">
    <property type="term" value="C:membrane"/>
    <property type="evidence" value="ECO:0000266"/>
    <property type="project" value="MGI"/>
</dbReference>
<dbReference type="GO" id="GO:0043178">
    <property type="term" value="F:alcohol binding"/>
    <property type="evidence" value="ECO:0007669"/>
    <property type="project" value="Ensembl"/>
</dbReference>
<dbReference type="GO" id="GO:0005537">
    <property type="term" value="F:D-mannose binding"/>
    <property type="evidence" value="ECO:0007669"/>
    <property type="project" value="Ensembl"/>
</dbReference>
<dbReference type="GO" id="GO:0004582">
    <property type="term" value="F:dolichyl-phosphate beta-D-mannosyltransferase activity"/>
    <property type="evidence" value="ECO:0000315"/>
    <property type="project" value="MGI"/>
</dbReference>
<dbReference type="GO" id="GO:0004169">
    <property type="term" value="F:dolichyl-phosphate-mannose-protein mannosyltransferase activity"/>
    <property type="evidence" value="ECO:0000250"/>
    <property type="project" value="HGNC-UCL"/>
</dbReference>
<dbReference type="GO" id="GO:0046872">
    <property type="term" value="F:metal ion binding"/>
    <property type="evidence" value="ECO:0000250"/>
    <property type="project" value="UniProtKB"/>
</dbReference>
<dbReference type="GO" id="GO:0019348">
    <property type="term" value="P:dolichol metabolic process"/>
    <property type="evidence" value="ECO:0000315"/>
    <property type="project" value="MGI"/>
</dbReference>
<dbReference type="GO" id="GO:0180047">
    <property type="term" value="P:dolichol phosphate mannose biosynthetic process"/>
    <property type="evidence" value="ECO:0000250"/>
    <property type="project" value="UniProtKB"/>
</dbReference>
<dbReference type="GO" id="GO:0019673">
    <property type="term" value="P:GDP-mannose metabolic process"/>
    <property type="evidence" value="ECO:0007669"/>
    <property type="project" value="Ensembl"/>
</dbReference>
<dbReference type="GO" id="GO:0006506">
    <property type="term" value="P:GPI anchor biosynthetic process"/>
    <property type="evidence" value="ECO:0000315"/>
    <property type="project" value="MGI"/>
</dbReference>
<dbReference type="GO" id="GO:0035268">
    <property type="term" value="P:protein mannosylation"/>
    <property type="evidence" value="ECO:0000250"/>
    <property type="project" value="HGNC-UCL"/>
</dbReference>
<dbReference type="GO" id="GO:0035269">
    <property type="term" value="P:protein O-linked mannosylation"/>
    <property type="evidence" value="ECO:0000250"/>
    <property type="project" value="UniProtKB"/>
</dbReference>
<dbReference type="GO" id="GO:0070482">
    <property type="term" value="P:response to oxygen levels"/>
    <property type="evidence" value="ECO:0000314"/>
    <property type="project" value="MGI"/>
</dbReference>
<dbReference type="CDD" id="cd06442">
    <property type="entry name" value="DPM1_like"/>
    <property type="match status" value="1"/>
</dbReference>
<dbReference type="FunFam" id="3.90.550.10:FF:000036">
    <property type="entry name" value="Dolichol-phosphate mannosyltransferase subunit 1"/>
    <property type="match status" value="1"/>
</dbReference>
<dbReference type="Gene3D" id="3.90.550.10">
    <property type="entry name" value="Spore Coat Polysaccharide Biosynthesis Protein SpsA, Chain A"/>
    <property type="match status" value="1"/>
</dbReference>
<dbReference type="InterPro" id="IPR039528">
    <property type="entry name" value="DPM1-like"/>
</dbReference>
<dbReference type="InterPro" id="IPR001173">
    <property type="entry name" value="Glyco_trans_2-like"/>
</dbReference>
<dbReference type="InterPro" id="IPR029044">
    <property type="entry name" value="Nucleotide-diphossugar_trans"/>
</dbReference>
<dbReference type="PANTHER" id="PTHR43398">
    <property type="entry name" value="DOLICHOL-PHOSPHATE MANNOSYLTRANSFERASE SUBUNIT 1"/>
    <property type="match status" value="1"/>
</dbReference>
<dbReference type="PANTHER" id="PTHR43398:SF1">
    <property type="entry name" value="DOLICHOL-PHOSPHATE MANNOSYLTRANSFERASE SUBUNIT 1"/>
    <property type="match status" value="1"/>
</dbReference>
<dbReference type="Pfam" id="PF00535">
    <property type="entry name" value="Glycos_transf_2"/>
    <property type="match status" value="1"/>
</dbReference>
<dbReference type="SUPFAM" id="SSF53448">
    <property type="entry name" value="Nucleotide-diphospho-sugar transferases"/>
    <property type="match status" value="1"/>
</dbReference>
<keyword id="KW-0007">Acetylation</keyword>
<keyword id="KW-0256">Endoplasmic reticulum</keyword>
<keyword id="KW-0328">Glycosyltransferase</keyword>
<keyword id="KW-0460">Magnesium</keyword>
<keyword id="KW-0464">Manganese</keyword>
<keyword id="KW-0479">Metal-binding</keyword>
<keyword id="KW-0597">Phosphoprotein</keyword>
<keyword id="KW-1185">Reference proteome</keyword>
<keyword id="KW-0808">Transferase</keyword>
<evidence type="ECO:0000250" key="1">
    <source>
        <dbReference type="UniProtKB" id="O60762"/>
    </source>
</evidence>
<evidence type="ECO:0000250" key="2">
    <source>
        <dbReference type="UniProtKB" id="Q8U4M3"/>
    </source>
</evidence>
<evidence type="ECO:0000256" key="3">
    <source>
        <dbReference type="SAM" id="MobiDB-lite"/>
    </source>
</evidence>
<evidence type="ECO:0000269" key="4">
    <source>
    </source>
</evidence>
<evidence type="ECO:0000305" key="5"/>
<evidence type="ECO:0000305" key="6">
    <source>
    </source>
</evidence>
<comment type="function">
    <text evidence="6">Transfers mannose from GDP-mannose to dolichol monophosphate to form dolichol phosphate mannose (Dol-P-Man) which is the mannosyl donor in pathways leading to N-glycosylation, glycosyl phosphatidylinositol membrane anchoring, and O-mannosylation of proteins; catalytic subunit of the dolichol-phosphate mannose (DPM) synthase complex.</text>
</comment>
<comment type="catalytic activity">
    <reaction evidence="6">
        <text>a di-trans,poly-cis-dolichyl phosphate + GDP-alpha-D-mannose = a di-trans,poly-cis-dolichyl beta-D-mannosyl phosphate + GDP</text>
        <dbReference type="Rhea" id="RHEA:21184"/>
        <dbReference type="Rhea" id="RHEA-COMP:19498"/>
        <dbReference type="Rhea" id="RHEA-COMP:19501"/>
        <dbReference type="ChEBI" id="CHEBI:57527"/>
        <dbReference type="ChEBI" id="CHEBI:57683"/>
        <dbReference type="ChEBI" id="CHEBI:58189"/>
        <dbReference type="ChEBI" id="CHEBI:58211"/>
        <dbReference type="EC" id="2.4.1.83"/>
    </reaction>
</comment>
<comment type="cofactor">
    <cofactor evidence="2">
        <name>Mg(2+)</name>
        <dbReference type="ChEBI" id="CHEBI:18420"/>
    </cofactor>
    <cofactor evidence="2">
        <name>Mn(2+)</name>
        <dbReference type="ChEBI" id="CHEBI:29035"/>
    </cofactor>
    <cofactor evidence="2">
        <name>Ca(2+)</name>
        <dbReference type="ChEBI" id="CHEBI:29108"/>
    </cofactor>
    <text evidence="2">Binds 1 divalent metal cation.</text>
</comment>
<comment type="pathway">
    <text evidence="4">Protein modification; protein glycosylation.</text>
</comment>
<comment type="subunit">
    <text evidence="1">Component of the dolichol-phosphate mannose (DPM) synthase complex composed of DPM1, DPM2 and DPM3; within the complex, directly interacts with DPM3. This interaction may stabilize DPM1.</text>
</comment>
<comment type="subcellular location">
    <subcellularLocation>
        <location>Endoplasmic reticulum</location>
    </subcellularLocation>
</comment>
<comment type="similarity">
    <text evidence="5">Belongs to the glycosyltransferase 2 family.</text>
</comment>